<comment type="function">
    <text evidence="3 5 6">According to PubMed:15187158 it is a receptor for the CD200 cell surface glycoprotein. According to PubMed:16081818 it is not a receptor for the CD200/OX2 cell surface glycoprotein. Involved in the recruitment or surface expression of the TYROBP receptor.</text>
</comment>
<comment type="subcellular location">
    <subcellularLocation>
        <location evidence="7">Membrane</location>
        <topology evidence="7">Single-pass type I membrane protein</topology>
    </subcellularLocation>
</comment>
<comment type="tissue specificity">
    <text evidence="3 4">Expressed in bone marrow, spleen, brain, lung, testis and thymus.</text>
</comment>
<comment type="similarity">
    <text evidence="7">Belongs to the CD200R family.</text>
</comment>
<organism>
    <name type="scientific">Mus musculus</name>
    <name type="common">Mouse</name>
    <dbReference type="NCBI Taxonomy" id="10090"/>
    <lineage>
        <taxon>Eukaryota</taxon>
        <taxon>Metazoa</taxon>
        <taxon>Chordata</taxon>
        <taxon>Craniata</taxon>
        <taxon>Vertebrata</taxon>
        <taxon>Euteleostomi</taxon>
        <taxon>Mammalia</taxon>
        <taxon>Eutheria</taxon>
        <taxon>Euarchontoglires</taxon>
        <taxon>Glires</taxon>
        <taxon>Rodentia</taxon>
        <taxon>Myomorpha</taxon>
        <taxon>Muroidea</taxon>
        <taxon>Muridae</taxon>
        <taxon>Murinae</taxon>
        <taxon>Mus</taxon>
        <taxon>Mus</taxon>
    </lineage>
</organism>
<protein>
    <recommendedName>
        <fullName>Cell surface glycoprotein CD200 receptor 2</fullName>
    </recommendedName>
    <alternativeName>
        <fullName>CD200 cell surface glycoprotein receptor-like 2</fullName>
        <shortName>CD200 receptor-like 2</shortName>
    </alternativeName>
    <alternativeName>
        <fullName>CD200 cell surface glycoprotein receptor-like c</fullName>
        <shortName>CD200RLc</shortName>
    </alternativeName>
    <alternativeName>
        <fullName>Cell surface glycoprotein OX2 receptor 2</fullName>
    </alternativeName>
</protein>
<dbReference type="EMBL" id="AY230198">
    <property type="protein sequence ID" value="AAO84052.1"/>
    <property type="molecule type" value="mRNA"/>
</dbReference>
<dbReference type="CCDS" id="CCDS28191.1"/>
<dbReference type="RefSeq" id="NP_996258.1">
    <property type="nucleotide sequence ID" value="NM_206535.1"/>
</dbReference>
<dbReference type="SMR" id="Q6XJV6"/>
<dbReference type="FunCoup" id="Q6XJV6">
    <property type="interactions" value="412"/>
</dbReference>
<dbReference type="STRING" id="10090.ENSMUSP00000099869"/>
<dbReference type="GlyCosmos" id="Q6XJV6">
    <property type="glycosylation" value="3 sites, No reported glycans"/>
</dbReference>
<dbReference type="GlyGen" id="Q6XJV6">
    <property type="glycosylation" value="3 sites"/>
</dbReference>
<dbReference type="PhosphoSitePlus" id="Q6XJV6"/>
<dbReference type="PaxDb" id="10090-ENSMUSP00000099869"/>
<dbReference type="ProteomicsDB" id="295638"/>
<dbReference type="DNASU" id="271375"/>
<dbReference type="Ensembl" id="ENSMUST00000102805.4">
    <property type="protein sequence ID" value="ENSMUSP00000099869.4"/>
    <property type="gene ID" value="ENSMUSG00000090176.2"/>
</dbReference>
<dbReference type="GeneID" id="271375"/>
<dbReference type="KEGG" id="mmu:271375"/>
<dbReference type="UCSC" id="uc007zhv.1">
    <property type="organism name" value="mouse"/>
</dbReference>
<dbReference type="AGR" id="MGI:3042847"/>
<dbReference type="CTD" id="271375"/>
<dbReference type="MGI" id="MGI:3042847">
    <property type="gene designation" value="Cd200r2"/>
</dbReference>
<dbReference type="VEuPathDB" id="HostDB:ENSMUSG00000090176"/>
<dbReference type="eggNOG" id="ENOG502S9IV">
    <property type="taxonomic scope" value="Eukaryota"/>
</dbReference>
<dbReference type="GeneTree" id="ENSGT00390000014496"/>
<dbReference type="HOGENOM" id="CLU_069156_0_1_1"/>
<dbReference type="InParanoid" id="Q6XJV6"/>
<dbReference type="OMA" id="NCKISFV"/>
<dbReference type="OrthoDB" id="8915654at2759"/>
<dbReference type="PhylomeDB" id="Q6XJV6"/>
<dbReference type="TreeFam" id="TF335960"/>
<dbReference type="Reactome" id="R-MMU-198933">
    <property type="pathway name" value="Immunoregulatory interactions between a Lymphoid and a non-Lymphoid cell"/>
</dbReference>
<dbReference type="BioGRID-ORCS" id="271375">
    <property type="hits" value="4 hits in 78 CRISPR screens"/>
</dbReference>
<dbReference type="PRO" id="PR:Q6XJV6"/>
<dbReference type="Proteomes" id="UP000000589">
    <property type="component" value="Chromosome 16"/>
</dbReference>
<dbReference type="RNAct" id="Q6XJV6">
    <property type="molecule type" value="protein"/>
</dbReference>
<dbReference type="Bgee" id="ENSMUSG00000090176">
    <property type="expression patterns" value="Expressed in sensory ganglion and 21 other cell types or tissues"/>
</dbReference>
<dbReference type="GO" id="GO:0009897">
    <property type="term" value="C:external side of plasma membrane"/>
    <property type="evidence" value="ECO:0000314"/>
    <property type="project" value="MGI"/>
</dbReference>
<dbReference type="GO" id="GO:0038023">
    <property type="term" value="F:signaling receptor activity"/>
    <property type="evidence" value="ECO:0000314"/>
    <property type="project" value="MGI"/>
</dbReference>
<dbReference type="GO" id="GO:0150077">
    <property type="term" value="P:regulation of neuroinflammatory response"/>
    <property type="evidence" value="ECO:0007669"/>
    <property type="project" value="InterPro"/>
</dbReference>
<dbReference type="CDD" id="cd20985">
    <property type="entry name" value="IgV_CD200R-like"/>
    <property type="match status" value="1"/>
</dbReference>
<dbReference type="FunFam" id="2.60.40.10:FF:000584">
    <property type="entry name" value="Cell surface glycoprotein CD200 receptor 1"/>
    <property type="match status" value="1"/>
</dbReference>
<dbReference type="Gene3D" id="2.60.40.10">
    <property type="entry name" value="Immunoglobulins"/>
    <property type="match status" value="2"/>
</dbReference>
<dbReference type="InterPro" id="IPR040012">
    <property type="entry name" value="CD200R"/>
</dbReference>
<dbReference type="InterPro" id="IPR013162">
    <property type="entry name" value="CD80_C2-set"/>
</dbReference>
<dbReference type="InterPro" id="IPR007110">
    <property type="entry name" value="Ig-like_dom"/>
</dbReference>
<dbReference type="InterPro" id="IPR036179">
    <property type="entry name" value="Ig-like_dom_sf"/>
</dbReference>
<dbReference type="InterPro" id="IPR013783">
    <property type="entry name" value="Ig-like_fold"/>
</dbReference>
<dbReference type="InterPro" id="IPR013106">
    <property type="entry name" value="Ig_V-set"/>
</dbReference>
<dbReference type="PANTHER" id="PTHR21462:SF2">
    <property type="entry name" value="CELL SURFACE GLYCOPROTEIN CD200 RECEPTOR 2"/>
    <property type="match status" value="1"/>
</dbReference>
<dbReference type="PANTHER" id="PTHR21462">
    <property type="entry name" value="CELL SURFACE GLYCOPROTEIN OX2 RECEPTOR PRECURSOR"/>
    <property type="match status" value="1"/>
</dbReference>
<dbReference type="Pfam" id="PF08205">
    <property type="entry name" value="C2-set_2"/>
    <property type="match status" value="1"/>
</dbReference>
<dbReference type="Pfam" id="PF07686">
    <property type="entry name" value="V-set"/>
    <property type="match status" value="1"/>
</dbReference>
<dbReference type="SUPFAM" id="SSF48726">
    <property type="entry name" value="Immunoglobulin"/>
    <property type="match status" value="2"/>
</dbReference>
<dbReference type="PROSITE" id="PS50835">
    <property type="entry name" value="IG_LIKE"/>
    <property type="match status" value="2"/>
</dbReference>
<gene>
    <name type="primary">Cd200r1l</name>
    <name type="synonym">Cd200r2</name>
</gene>
<keyword id="KW-1015">Disulfide bond</keyword>
<keyword id="KW-0325">Glycoprotein</keyword>
<keyword id="KW-0393">Immunoglobulin domain</keyword>
<keyword id="KW-0472">Membrane</keyword>
<keyword id="KW-0675">Receptor</keyword>
<keyword id="KW-1185">Reference proteome</keyword>
<keyword id="KW-0677">Repeat</keyword>
<keyword id="KW-0732">Signal</keyword>
<keyword id="KW-0812">Transmembrane</keyword>
<keyword id="KW-1133">Transmembrane helix</keyword>
<evidence type="ECO:0000255" key="1"/>
<evidence type="ECO:0000255" key="2">
    <source>
        <dbReference type="PROSITE-ProRule" id="PRU00114"/>
    </source>
</evidence>
<evidence type="ECO:0000269" key="3">
    <source>
    </source>
</evidence>
<evidence type="ECO:0000269" key="4">
    <source>
    </source>
</evidence>
<evidence type="ECO:0000269" key="5">
    <source>
    </source>
</evidence>
<evidence type="ECO:0000269" key="6">
    <source>
    </source>
</evidence>
<evidence type="ECO:0000305" key="7"/>
<feature type="signal peptide" evidence="1">
    <location>
        <begin position="1"/>
        <end position="24"/>
    </location>
</feature>
<feature type="chain" id="PRO_0000346452" description="Cell surface glycoprotein CD200 receptor 2">
    <location>
        <begin position="25"/>
        <end position="249"/>
    </location>
</feature>
<feature type="topological domain" description="Extracellular" evidence="1">
    <location>
        <begin position="25"/>
        <end position="220"/>
    </location>
</feature>
<feature type="transmembrane region" description="Helical" evidence="1">
    <location>
        <begin position="221"/>
        <end position="241"/>
    </location>
</feature>
<feature type="topological domain" description="Cytoplasmic" evidence="1">
    <location>
        <begin position="242"/>
        <end position="249"/>
    </location>
</feature>
<feature type="domain" description="Ig-like V-type">
    <location>
        <begin position="25"/>
        <end position="124"/>
    </location>
</feature>
<feature type="domain" description="Ig-like C2-type">
    <location>
        <begin position="113"/>
        <end position="208"/>
    </location>
</feature>
<feature type="glycosylation site" description="N-linked (GlcNAc...) asparagine" evidence="1">
    <location>
        <position position="73"/>
    </location>
</feature>
<feature type="glycosylation site" description="N-linked (GlcNAc...) asparagine" evidence="1">
    <location>
        <position position="138"/>
    </location>
</feature>
<feature type="glycosylation site" description="N-linked (GlcNAc...) asparagine" evidence="1">
    <location>
        <position position="171"/>
    </location>
</feature>
<feature type="disulfide bond" evidence="2">
    <location>
        <begin position="38"/>
        <end position="108"/>
    </location>
</feature>
<feature type="disulfide bond" evidence="2">
    <location>
        <begin position="143"/>
        <end position="192"/>
    </location>
</feature>
<name>MO2R2_MOUSE</name>
<proteinExistence type="evidence at transcript level"/>
<sequence>MHALGRTPALTLLIFIYNFVSVYTIVSVQMGTKARLCCRSIPLTKAVLITWIIKPRGQPSCIMAYKVETKETNETCLGRNITWASTPDHIPDLQISAVALQHEGNYLCEITTPEGNFHKVYDLQVLVPPEVTYFLGENRTAVCEAMAGKPAAQISWTPDGDCVTKSESHSNGTVTVRSTCHWEQNNVSAVSCIVSHSTGNQSLSIELSRGTTSTTPSLLTILYVKMVLLGIILLKVGFAFFQKRNVTRT</sequence>
<reference key="1">
    <citation type="journal article" date="2004" name="J. Immunol.">
        <title>CD200 is a ligand for all members of the CD200R family of immunoregulatory molecules.</title>
        <authorList>
            <person name="Gorczynski R."/>
            <person name="Chen Z."/>
            <person name="Kai Y."/>
            <person name="Lee L."/>
            <person name="Wong S."/>
            <person name="Marsden P.A."/>
        </authorList>
    </citation>
    <scope>NUCLEOTIDE SEQUENCE [MRNA]</scope>
    <scope>FUNCTION</scope>
    <scope>TISSUE SPECIFICITY</scope>
    <source>
        <strain>C57BL/6J</strain>
    </source>
</reference>
<reference key="2">
    <citation type="journal article" date="2004" name="Am. J. Reprod. Immunol.">
        <title>Structural and functional heterogeneity in the CD200R family of immunoregulatory molecules and their expression at the feto-maternal interface.</title>
        <authorList>
            <person name="Gorczynski R.M."/>
            <person name="Chen Z."/>
            <person name="Clark D.A."/>
            <person name="Kai Y."/>
            <person name="Lee L."/>
            <person name="Nachman J."/>
            <person name="Wong S."/>
            <person name="Marsden P."/>
        </authorList>
    </citation>
    <scope>IDENTIFICATION</scope>
    <scope>TISSUE SPECIFICITY</scope>
</reference>
<reference key="3">
    <citation type="journal article" date="2004" name="J. Biol. Chem.">
        <title>CD200 receptor family members represent novel DAP12-associated activating receptors on basophils and mast cells.</title>
        <authorList>
            <person name="Voehringer D."/>
            <person name="Rosen D.B."/>
            <person name="Lanier L.L."/>
            <person name="Locksley R.M."/>
        </authorList>
    </citation>
    <scope>IDENTIFICATION</scope>
    <scope>FUNCTION</scope>
    <source>
        <strain>BALB/cJ</strain>
    </source>
</reference>
<reference key="4">
    <citation type="journal article" date="2005" name="J. Immunol.">
        <title>Recombinant CD200 protein does not bind activating proteins closely related to CD200 receptor.</title>
        <authorList>
            <person name="Hatherley D."/>
            <person name="Cherwinski H.M."/>
            <person name="Moshref M."/>
            <person name="Barclay A.N."/>
        </authorList>
    </citation>
    <scope>FUNCTION</scope>
</reference>
<accession>Q6XJV6</accession>